<comment type="function">
    <text evidence="1">Provides the cells with the ability to utilize trehalose at high osmolarity by splitting it into glucose molecules that can subsequently be taken up by the phosphotransferase-mediated uptake system.</text>
</comment>
<comment type="catalytic activity">
    <reaction evidence="1">
        <text>alpha,alpha-trehalose + H2O = alpha-D-glucose + beta-D-glucose</text>
        <dbReference type="Rhea" id="RHEA:32675"/>
        <dbReference type="ChEBI" id="CHEBI:15377"/>
        <dbReference type="ChEBI" id="CHEBI:15903"/>
        <dbReference type="ChEBI" id="CHEBI:16551"/>
        <dbReference type="ChEBI" id="CHEBI:17925"/>
        <dbReference type="EC" id="3.2.1.28"/>
    </reaction>
</comment>
<comment type="subcellular location">
    <subcellularLocation>
        <location evidence="1">Periplasm</location>
    </subcellularLocation>
</comment>
<comment type="similarity">
    <text evidence="1">Belongs to the glycosyl hydrolase 37 family.</text>
</comment>
<feature type="signal peptide" evidence="1">
    <location>
        <begin position="1"/>
        <end position="30"/>
    </location>
</feature>
<feature type="chain" id="PRO_0000012044" description="Periplasmic trehalase">
    <location>
        <begin position="31"/>
        <end position="545"/>
    </location>
</feature>
<feature type="active site" description="Proton donor/acceptor" evidence="1">
    <location>
        <position position="320"/>
    </location>
</feature>
<feature type="active site" description="Proton donor/acceptor" evidence="1">
    <location>
        <position position="503"/>
    </location>
</feature>
<feature type="binding site" evidence="1">
    <location>
        <position position="160"/>
    </location>
    <ligand>
        <name>substrate</name>
    </ligand>
</feature>
<feature type="binding site" evidence="1">
    <location>
        <begin position="167"/>
        <end position="168"/>
    </location>
    <ligand>
        <name>substrate</name>
    </ligand>
</feature>
<feature type="binding site" evidence="1">
    <location>
        <position position="204"/>
    </location>
    <ligand>
        <name>substrate</name>
    </ligand>
</feature>
<feature type="binding site" evidence="1">
    <location>
        <begin position="213"/>
        <end position="215"/>
    </location>
    <ligand>
        <name>substrate</name>
    </ligand>
</feature>
<feature type="binding site" evidence="1">
    <location>
        <begin position="285"/>
        <end position="287"/>
    </location>
    <ligand>
        <name>substrate</name>
    </ligand>
</feature>
<feature type="binding site" evidence="1">
    <location>
        <position position="318"/>
    </location>
    <ligand>
        <name>substrate</name>
    </ligand>
</feature>
<feature type="binding site" evidence="1">
    <location>
        <position position="518"/>
    </location>
    <ligand>
        <name>substrate</name>
    </ligand>
</feature>
<name>TREA_PSEAE</name>
<reference key="1">
    <citation type="journal article" date="2000" name="Nature">
        <title>Complete genome sequence of Pseudomonas aeruginosa PAO1, an opportunistic pathogen.</title>
        <authorList>
            <person name="Stover C.K."/>
            <person name="Pham X.-Q.T."/>
            <person name="Erwin A.L."/>
            <person name="Mizoguchi S.D."/>
            <person name="Warrener P."/>
            <person name="Hickey M.J."/>
            <person name="Brinkman F.S.L."/>
            <person name="Hufnagle W.O."/>
            <person name="Kowalik D.J."/>
            <person name="Lagrou M."/>
            <person name="Garber R.L."/>
            <person name="Goltry L."/>
            <person name="Tolentino E."/>
            <person name="Westbrock-Wadman S."/>
            <person name="Yuan Y."/>
            <person name="Brody L.L."/>
            <person name="Coulter S.N."/>
            <person name="Folger K.R."/>
            <person name="Kas A."/>
            <person name="Larbig K."/>
            <person name="Lim R.M."/>
            <person name="Smith K.A."/>
            <person name="Spencer D.H."/>
            <person name="Wong G.K.-S."/>
            <person name="Wu Z."/>
            <person name="Paulsen I.T."/>
            <person name="Reizer J."/>
            <person name="Saier M.H. Jr."/>
            <person name="Hancock R.E.W."/>
            <person name="Lory S."/>
            <person name="Olson M.V."/>
        </authorList>
    </citation>
    <scope>NUCLEOTIDE SEQUENCE [LARGE SCALE GENOMIC DNA]</scope>
    <source>
        <strain>ATCC 15692 / DSM 22644 / CIP 104116 / JCM 14847 / LMG 12228 / 1C / PRS 101 / PAO1</strain>
    </source>
</reference>
<organism>
    <name type="scientific">Pseudomonas aeruginosa (strain ATCC 15692 / DSM 22644 / CIP 104116 / JCM 14847 / LMG 12228 / 1C / PRS 101 / PAO1)</name>
    <dbReference type="NCBI Taxonomy" id="208964"/>
    <lineage>
        <taxon>Bacteria</taxon>
        <taxon>Pseudomonadati</taxon>
        <taxon>Pseudomonadota</taxon>
        <taxon>Gammaproteobacteria</taxon>
        <taxon>Pseudomonadales</taxon>
        <taxon>Pseudomonadaceae</taxon>
        <taxon>Pseudomonas</taxon>
    </lineage>
</organism>
<accession>Q9I165</accession>
<protein>
    <recommendedName>
        <fullName evidence="1">Periplasmic trehalase</fullName>
        <ecNumber evidence="1">3.2.1.28</ecNumber>
    </recommendedName>
    <alternativeName>
        <fullName evidence="1">Alpha,alpha-trehalase</fullName>
    </alternativeName>
    <alternativeName>
        <fullName evidence="1">Alpha,alpha-trehalose glucohydrolase</fullName>
    </alternativeName>
</protein>
<keyword id="KW-0326">Glycosidase</keyword>
<keyword id="KW-0378">Hydrolase</keyword>
<keyword id="KW-0574">Periplasm</keyword>
<keyword id="KW-1185">Reference proteome</keyword>
<keyword id="KW-0732">Signal</keyword>
<sequence>MPDRTALPRAMLAAWVLLLLAACSQGPAPTPPASWGWQDASGERAIAPDEAYPELFQAVQENRLFSDQKHFVDALPLREPARIRADYLRERERPGFDLRAFVGRNFEESGSVETAPPEAGADLASHISDLWPALTRHYEQVPAHSSLLPLPKPYVVPGGRFREVYYWDSYFTMLGLAESGQHQRVRDMLDNFAYLIDTYGHIPNGNRSYYLSRSQPPFFAYMVDLQARREGDAAYRRYLPQLQKEYAYWMEGSAGLRPNEARLHVVKLADGSLLNRYWDNRDTPRQESFLEDRATAARAPQRPAGEVYRDLRAGAESGWDFSSRWLDDGRELASIRTTAIVPVDLNALLYHLERIIAKACASSALKACEQGYGARAEKRRQAIEDHLWHPAGYYADYDWQRRRPIERINAASLFPLFTGLASAERAGRTADSVAAQLLRPGGLATTTRASGQQWDEPNGWAPLQWVAVQGLRAYGRDALAEDIGRRFLAQVQQVYDREGKLVEKYDISGNQGGGGGGEYPLQDGFGWSNGVTLQLLRLYGPGAGR</sequence>
<dbReference type="EC" id="3.2.1.28" evidence="1"/>
<dbReference type="EMBL" id="AE004091">
    <property type="protein sequence ID" value="AAG05804.1"/>
    <property type="molecule type" value="Genomic_DNA"/>
</dbReference>
<dbReference type="PIR" id="H83342">
    <property type="entry name" value="H83342"/>
</dbReference>
<dbReference type="RefSeq" id="NP_251106.1">
    <property type="nucleotide sequence ID" value="NC_002516.2"/>
</dbReference>
<dbReference type="RefSeq" id="WP_010895614.1">
    <property type="nucleotide sequence ID" value="NZ_QZGE01000027.1"/>
</dbReference>
<dbReference type="SMR" id="Q9I165"/>
<dbReference type="FunCoup" id="Q9I165">
    <property type="interactions" value="167"/>
</dbReference>
<dbReference type="STRING" id="208964.PA2416"/>
<dbReference type="CAZy" id="GH37">
    <property type="family name" value="Glycoside Hydrolase Family 37"/>
</dbReference>
<dbReference type="PaxDb" id="208964-PA2416"/>
<dbReference type="GeneID" id="882861"/>
<dbReference type="KEGG" id="pae:PA2416"/>
<dbReference type="PATRIC" id="fig|208964.12.peg.2526"/>
<dbReference type="PseudoCAP" id="PA2416"/>
<dbReference type="HOGENOM" id="CLU_006451_3_1_6"/>
<dbReference type="InParanoid" id="Q9I165"/>
<dbReference type="OrthoDB" id="106887at2"/>
<dbReference type="PhylomeDB" id="Q9I165"/>
<dbReference type="BioCyc" id="PAER208964:G1FZ6-2453-MONOMER"/>
<dbReference type="Proteomes" id="UP000002438">
    <property type="component" value="Chromosome"/>
</dbReference>
<dbReference type="GO" id="GO:0042597">
    <property type="term" value="C:periplasmic space"/>
    <property type="evidence" value="ECO:0007669"/>
    <property type="project" value="UniProtKB-SubCell"/>
</dbReference>
<dbReference type="GO" id="GO:0004555">
    <property type="term" value="F:alpha,alpha-trehalase activity"/>
    <property type="evidence" value="ECO:0000318"/>
    <property type="project" value="GO_Central"/>
</dbReference>
<dbReference type="GO" id="GO:0015927">
    <property type="term" value="F:trehalase activity"/>
    <property type="evidence" value="ECO:0000315"/>
    <property type="project" value="PseudoCAP"/>
</dbReference>
<dbReference type="GO" id="GO:0044248">
    <property type="term" value="P:cellular catabolic process"/>
    <property type="evidence" value="ECO:0000315"/>
    <property type="project" value="PseudoCAP"/>
</dbReference>
<dbReference type="GO" id="GO:0071474">
    <property type="term" value="P:cellular hyperosmotic response"/>
    <property type="evidence" value="ECO:0007669"/>
    <property type="project" value="InterPro"/>
</dbReference>
<dbReference type="GO" id="GO:0005993">
    <property type="term" value="P:trehalose catabolic process"/>
    <property type="evidence" value="ECO:0000318"/>
    <property type="project" value="GO_Central"/>
</dbReference>
<dbReference type="FunFam" id="1.50.10.10:FF:000003">
    <property type="entry name" value="Cytoplasmic trehalase"/>
    <property type="match status" value="1"/>
</dbReference>
<dbReference type="Gene3D" id="1.50.10.10">
    <property type="match status" value="1"/>
</dbReference>
<dbReference type="HAMAP" id="MF_01060">
    <property type="entry name" value="Peripl_trehalase"/>
    <property type="match status" value="1"/>
</dbReference>
<dbReference type="InterPro" id="IPR008928">
    <property type="entry name" value="6-hairpin_glycosidase_sf"/>
</dbReference>
<dbReference type="InterPro" id="IPR012341">
    <property type="entry name" value="6hp_glycosidase-like_sf"/>
</dbReference>
<dbReference type="InterPro" id="IPR001661">
    <property type="entry name" value="Glyco_hydro_37"/>
</dbReference>
<dbReference type="InterPro" id="IPR018232">
    <property type="entry name" value="Glyco_hydro_37_CS"/>
</dbReference>
<dbReference type="InterPro" id="IPR023720">
    <property type="entry name" value="Trehalase_periplasmic"/>
</dbReference>
<dbReference type="NCBIfam" id="NF009773">
    <property type="entry name" value="PRK13270.1"/>
    <property type="match status" value="1"/>
</dbReference>
<dbReference type="NCBIfam" id="NF009774">
    <property type="entry name" value="PRK13271.1"/>
    <property type="match status" value="1"/>
</dbReference>
<dbReference type="NCBIfam" id="NF009775">
    <property type="entry name" value="PRK13272.1"/>
    <property type="match status" value="1"/>
</dbReference>
<dbReference type="PANTHER" id="PTHR23403">
    <property type="entry name" value="TREHALASE"/>
    <property type="match status" value="1"/>
</dbReference>
<dbReference type="PANTHER" id="PTHR23403:SF1">
    <property type="entry name" value="TREHALASE"/>
    <property type="match status" value="1"/>
</dbReference>
<dbReference type="Pfam" id="PF01204">
    <property type="entry name" value="Trehalase"/>
    <property type="match status" value="1"/>
</dbReference>
<dbReference type="PRINTS" id="PR00744">
    <property type="entry name" value="GLHYDRLASE37"/>
</dbReference>
<dbReference type="SUPFAM" id="SSF48208">
    <property type="entry name" value="Six-hairpin glycosidases"/>
    <property type="match status" value="1"/>
</dbReference>
<dbReference type="PROSITE" id="PS00927">
    <property type="entry name" value="TREHALASE_1"/>
    <property type="match status" value="1"/>
</dbReference>
<dbReference type="PROSITE" id="PS00928">
    <property type="entry name" value="TREHALASE_2"/>
    <property type="match status" value="1"/>
</dbReference>
<gene>
    <name evidence="1" type="primary">treA</name>
    <name type="ordered locus">PA2416</name>
</gene>
<evidence type="ECO:0000255" key="1">
    <source>
        <dbReference type="HAMAP-Rule" id="MF_01060"/>
    </source>
</evidence>
<proteinExistence type="inferred from homology"/>